<evidence type="ECO:0000255" key="1">
    <source>
        <dbReference type="HAMAP-Rule" id="MF_01707"/>
    </source>
</evidence>
<evidence type="ECO:0000305" key="2"/>
<feature type="chain" id="PRO_0000092185" description="Cytochrome c biogenesis ATP-binding export protein CcmA">
    <location>
        <begin position="1"/>
        <end position="200"/>
    </location>
</feature>
<feature type="domain" description="ABC transporter" evidence="1">
    <location>
        <begin position="2"/>
        <end position="200"/>
    </location>
</feature>
<feature type="binding site" evidence="1">
    <location>
        <begin position="34"/>
        <end position="41"/>
    </location>
    <ligand>
        <name>ATP</name>
        <dbReference type="ChEBI" id="CHEBI:30616"/>
    </ligand>
</feature>
<gene>
    <name evidence="1" type="primary">ccmA</name>
    <name type="ordered locus">lpg0856</name>
</gene>
<sequence>MLDVIELDFDYHDQPLLQQISFHLPAGGLLHLKGSNGAGKTTLLKLIAGLLNPEKGEILFERQSIKKDLCTYQKQLCFVGHRSGINPYLTLRENCLYDIHFSPGAVGITELCRLFSLEHLIDYPCGLLSSGQKRQVALLRLWMSKAKLWLLDEPLVALDELSLLTIITKIQEHRAKGGAVLLTSHQDLPLNKADYEEYHL</sequence>
<comment type="function">
    <text evidence="1">Part of the ABC transporter complex CcmAB involved in the biogenesis of c-type cytochromes; once thought to export heme, this seems not to be the case, but its exact role is uncertain. Responsible for energy coupling to the transport system.</text>
</comment>
<comment type="catalytic activity">
    <reaction evidence="1">
        <text>heme b(in) + ATP + H2O = heme b(out) + ADP + phosphate + H(+)</text>
        <dbReference type="Rhea" id="RHEA:19261"/>
        <dbReference type="ChEBI" id="CHEBI:15377"/>
        <dbReference type="ChEBI" id="CHEBI:15378"/>
        <dbReference type="ChEBI" id="CHEBI:30616"/>
        <dbReference type="ChEBI" id="CHEBI:43474"/>
        <dbReference type="ChEBI" id="CHEBI:60344"/>
        <dbReference type="ChEBI" id="CHEBI:456216"/>
        <dbReference type="EC" id="7.6.2.5"/>
    </reaction>
</comment>
<comment type="subunit">
    <text evidence="1">The complex is composed of two ATP-binding proteins (CcmA) and two transmembrane proteins (CcmB).</text>
</comment>
<comment type="subcellular location">
    <subcellularLocation>
        <location evidence="1">Cell inner membrane</location>
        <topology evidence="1">Peripheral membrane protein</topology>
    </subcellularLocation>
</comment>
<comment type="similarity">
    <text evidence="1">Belongs to the ABC transporter superfamily. CcmA exporter (TC 3.A.1.107) family.</text>
</comment>
<comment type="sequence caution" evidence="2">
    <conflict type="erroneous initiation">
        <sequence resource="EMBL-CDS" id="AAU26944"/>
    </conflict>
</comment>
<organism>
    <name type="scientific">Legionella pneumophila subsp. pneumophila (strain Philadelphia 1 / ATCC 33152 / DSM 7513)</name>
    <dbReference type="NCBI Taxonomy" id="272624"/>
    <lineage>
        <taxon>Bacteria</taxon>
        <taxon>Pseudomonadati</taxon>
        <taxon>Pseudomonadota</taxon>
        <taxon>Gammaproteobacteria</taxon>
        <taxon>Legionellales</taxon>
        <taxon>Legionellaceae</taxon>
        <taxon>Legionella</taxon>
    </lineage>
</organism>
<keyword id="KW-0067">ATP-binding</keyword>
<keyword id="KW-0997">Cell inner membrane</keyword>
<keyword id="KW-1003">Cell membrane</keyword>
<keyword id="KW-0201">Cytochrome c-type biogenesis</keyword>
<keyword id="KW-0472">Membrane</keyword>
<keyword id="KW-0547">Nucleotide-binding</keyword>
<keyword id="KW-1185">Reference proteome</keyword>
<keyword id="KW-1278">Translocase</keyword>
<keyword id="KW-0813">Transport</keyword>
<dbReference type="EC" id="7.6.2.5" evidence="1"/>
<dbReference type="EMBL" id="AE017354">
    <property type="protein sequence ID" value="AAU26944.1"/>
    <property type="status" value="ALT_INIT"/>
    <property type="molecule type" value="Genomic_DNA"/>
</dbReference>
<dbReference type="RefSeq" id="WP_010946592.1">
    <property type="nucleotide sequence ID" value="NC_002942.5"/>
</dbReference>
<dbReference type="RefSeq" id="YP_094891.2">
    <property type="nucleotide sequence ID" value="NC_002942.5"/>
</dbReference>
<dbReference type="SMR" id="Q5ZX76"/>
<dbReference type="STRING" id="272624.lpg0856"/>
<dbReference type="PaxDb" id="272624-lpg0856"/>
<dbReference type="GeneID" id="57034844"/>
<dbReference type="KEGG" id="lpn:lpg0856"/>
<dbReference type="PATRIC" id="fig|272624.6.peg.887"/>
<dbReference type="eggNOG" id="COG4133">
    <property type="taxonomic scope" value="Bacteria"/>
</dbReference>
<dbReference type="HOGENOM" id="CLU_000604_1_2_6"/>
<dbReference type="OrthoDB" id="9800654at2"/>
<dbReference type="Proteomes" id="UP000000609">
    <property type="component" value="Chromosome"/>
</dbReference>
<dbReference type="GO" id="GO:0005886">
    <property type="term" value="C:plasma membrane"/>
    <property type="evidence" value="ECO:0007669"/>
    <property type="project" value="UniProtKB-SubCell"/>
</dbReference>
<dbReference type="GO" id="GO:0015439">
    <property type="term" value="F:ABC-type heme transporter activity"/>
    <property type="evidence" value="ECO:0007669"/>
    <property type="project" value="UniProtKB-EC"/>
</dbReference>
<dbReference type="GO" id="GO:0005524">
    <property type="term" value="F:ATP binding"/>
    <property type="evidence" value="ECO:0007669"/>
    <property type="project" value="UniProtKB-KW"/>
</dbReference>
<dbReference type="GO" id="GO:0016887">
    <property type="term" value="F:ATP hydrolysis activity"/>
    <property type="evidence" value="ECO:0007669"/>
    <property type="project" value="InterPro"/>
</dbReference>
<dbReference type="GO" id="GO:0017004">
    <property type="term" value="P:cytochrome complex assembly"/>
    <property type="evidence" value="ECO:0007669"/>
    <property type="project" value="UniProtKB-KW"/>
</dbReference>
<dbReference type="Gene3D" id="3.40.50.300">
    <property type="entry name" value="P-loop containing nucleotide triphosphate hydrolases"/>
    <property type="match status" value="1"/>
</dbReference>
<dbReference type="InterPro" id="IPR003593">
    <property type="entry name" value="AAA+_ATPase"/>
</dbReference>
<dbReference type="InterPro" id="IPR003439">
    <property type="entry name" value="ABC_transporter-like_ATP-bd"/>
</dbReference>
<dbReference type="InterPro" id="IPR005895">
    <property type="entry name" value="ABC_transptr_haem_export_CcmA"/>
</dbReference>
<dbReference type="InterPro" id="IPR027417">
    <property type="entry name" value="P-loop_NTPase"/>
</dbReference>
<dbReference type="NCBIfam" id="TIGR01189">
    <property type="entry name" value="ccmA"/>
    <property type="match status" value="1"/>
</dbReference>
<dbReference type="NCBIfam" id="NF010062">
    <property type="entry name" value="PRK13540.1"/>
    <property type="match status" value="1"/>
</dbReference>
<dbReference type="PANTHER" id="PTHR43499">
    <property type="entry name" value="ABC TRANSPORTER I FAMILY MEMBER 1"/>
    <property type="match status" value="1"/>
</dbReference>
<dbReference type="PANTHER" id="PTHR43499:SF1">
    <property type="entry name" value="ABC TRANSPORTER I FAMILY MEMBER 1"/>
    <property type="match status" value="1"/>
</dbReference>
<dbReference type="Pfam" id="PF00005">
    <property type="entry name" value="ABC_tran"/>
    <property type="match status" value="1"/>
</dbReference>
<dbReference type="SMART" id="SM00382">
    <property type="entry name" value="AAA"/>
    <property type="match status" value="1"/>
</dbReference>
<dbReference type="SUPFAM" id="SSF52540">
    <property type="entry name" value="P-loop containing nucleoside triphosphate hydrolases"/>
    <property type="match status" value="1"/>
</dbReference>
<dbReference type="PROSITE" id="PS50893">
    <property type="entry name" value="ABC_TRANSPORTER_2"/>
    <property type="match status" value="1"/>
</dbReference>
<dbReference type="PROSITE" id="PS51243">
    <property type="entry name" value="CCMA"/>
    <property type="match status" value="1"/>
</dbReference>
<accession>Q5ZX76</accession>
<proteinExistence type="inferred from homology"/>
<name>CCMA_LEGPH</name>
<protein>
    <recommendedName>
        <fullName evidence="1">Cytochrome c biogenesis ATP-binding export protein CcmA</fullName>
        <ecNumber evidence="1">7.6.2.5</ecNumber>
    </recommendedName>
    <alternativeName>
        <fullName evidence="1">Heme exporter protein A</fullName>
    </alternativeName>
</protein>
<reference key="1">
    <citation type="journal article" date="2004" name="Science">
        <title>The genomic sequence of the accidental pathogen Legionella pneumophila.</title>
        <authorList>
            <person name="Chien M."/>
            <person name="Morozova I."/>
            <person name="Shi S."/>
            <person name="Sheng H."/>
            <person name="Chen J."/>
            <person name="Gomez S.M."/>
            <person name="Asamani G."/>
            <person name="Hill K."/>
            <person name="Nuara J."/>
            <person name="Feder M."/>
            <person name="Rineer J."/>
            <person name="Greenberg J.J."/>
            <person name="Steshenko V."/>
            <person name="Park S.H."/>
            <person name="Zhao B."/>
            <person name="Teplitskaya E."/>
            <person name="Edwards J.R."/>
            <person name="Pampou S."/>
            <person name="Georghiou A."/>
            <person name="Chou I.-C."/>
            <person name="Iannuccilli W."/>
            <person name="Ulz M.E."/>
            <person name="Kim D.H."/>
            <person name="Geringer-Sameth A."/>
            <person name="Goldsberry C."/>
            <person name="Morozov P."/>
            <person name="Fischer S.G."/>
            <person name="Segal G."/>
            <person name="Qu X."/>
            <person name="Rzhetsky A."/>
            <person name="Zhang P."/>
            <person name="Cayanis E."/>
            <person name="De Jong P.J."/>
            <person name="Ju J."/>
            <person name="Kalachikov S."/>
            <person name="Shuman H.A."/>
            <person name="Russo J.J."/>
        </authorList>
    </citation>
    <scope>NUCLEOTIDE SEQUENCE [LARGE SCALE GENOMIC DNA]</scope>
    <source>
        <strain>Philadelphia 1 / ATCC 33152 / DSM 7513</strain>
    </source>
</reference>